<sequence length="519" mass="58072">MAFLHFDNRFIRELPGDPLTLNQPRQVHAAFWSAVTPAPVPQPQLIASSAEVAALLGISLAELQQPAWVAALSGNGLLDGMSPFATCYGGHQFGNWAGQLGDGRAISLGELIHNDLRWELQLKGAGVTPYSRRGDGKAVLRSSIREFLCSEAMFHLGVPTTRALSLVLTGEQIWRDMFYDGNPQQEPGAIVCRVAPSFIRFGHFQLPAMRGESDLLNQLIDFTIDRDFPHLSAQPATVRRGVWFSEVCITTAKLMVEWTRVGFVHGVMNTDNMSILGLTIDYGPYGWVDNFDLNWTPNTTDAEGLRYCFGRQPAIARWNLERLAEALGTVMTDHAILAQGIEMFDETFAQEMAAMLAAKLGWQQWLPEDSELVNRLFDLLQQAEVDMTLFFRRLALVDVSAPDLTVLADAFYRDDLFCQHQPAFTQWLTNYSQRVLSEGVLPAERAARMNQVNPVYVLRNYLAQQVIDAAEQGNYQPIAELLEVLRQPYTEQSGKEAYAQKRPDWARHKPGCSMLSCSS</sequence>
<accession>C4LAV8</accession>
<evidence type="ECO:0000255" key="1">
    <source>
        <dbReference type="HAMAP-Rule" id="MF_00692"/>
    </source>
</evidence>
<keyword id="KW-0067">ATP-binding</keyword>
<keyword id="KW-0460">Magnesium</keyword>
<keyword id="KW-0464">Manganese</keyword>
<keyword id="KW-0479">Metal-binding</keyword>
<keyword id="KW-0547">Nucleotide-binding</keyword>
<keyword id="KW-0548">Nucleotidyltransferase</keyword>
<keyword id="KW-1185">Reference proteome</keyword>
<keyword id="KW-0808">Transferase</keyword>
<organism>
    <name type="scientific">Tolumonas auensis (strain DSM 9187 / NBRC 110442 / TA 4)</name>
    <dbReference type="NCBI Taxonomy" id="595494"/>
    <lineage>
        <taxon>Bacteria</taxon>
        <taxon>Pseudomonadati</taxon>
        <taxon>Pseudomonadota</taxon>
        <taxon>Gammaproteobacteria</taxon>
        <taxon>Aeromonadales</taxon>
        <taxon>Aeromonadaceae</taxon>
        <taxon>Tolumonas</taxon>
    </lineage>
</organism>
<dbReference type="EC" id="2.7.7.-" evidence="1"/>
<dbReference type="EC" id="2.7.7.108" evidence="1"/>
<dbReference type="EMBL" id="CP001616">
    <property type="protein sequence ID" value="ACQ92312.1"/>
    <property type="molecule type" value="Genomic_DNA"/>
</dbReference>
<dbReference type="RefSeq" id="WP_012728911.1">
    <property type="nucleotide sequence ID" value="NC_012691.1"/>
</dbReference>
<dbReference type="SMR" id="C4LAV8"/>
<dbReference type="STRING" id="595494.Tola_0683"/>
<dbReference type="KEGG" id="tau:Tola_0683"/>
<dbReference type="eggNOG" id="COG0397">
    <property type="taxonomic scope" value="Bacteria"/>
</dbReference>
<dbReference type="HOGENOM" id="CLU_010245_4_0_6"/>
<dbReference type="OrthoDB" id="9776281at2"/>
<dbReference type="Proteomes" id="UP000009073">
    <property type="component" value="Chromosome"/>
</dbReference>
<dbReference type="GO" id="GO:0070733">
    <property type="term" value="F:AMPylase activity"/>
    <property type="evidence" value="ECO:0007669"/>
    <property type="project" value="RHEA"/>
</dbReference>
<dbReference type="GO" id="GO:0005524">
    <property type="term" value="F:ATP binding"/>
    <property type="evidence" value="ECO:0007669"/>
    <property type="project" value="UniProtKB-UniRule"/>
</dbReference>
<dbReference type="GO" id="GO:0000287">
    <property type="term" value="F:magnesium ion binding"/>
    <property type="evidence" value="ECO:0007669"/>
    <property type="project" value="UniProtKB-UniRule"/>
</dbReference>
<dbReference type="HAMAP" id="MF_00692">
    <property type="entry name" value="YdiU_SelO"/>
    <property type="match status" value="1"/>
</dbReference>
<dbReference type="InterPro" id="IPR003846">
    <property type="entry name" value="SelO"/>
</dbReference>
<dbReference type="NCBIfam" id="NF000658">
    <property type="entry name" value="PRK00029.1"/>
    <property type="match status" value="1"/>
</dbReference>
<dbReference type="PANTHER" id="PTHR32057">
    <property type="entry name" value="PROTEIN ADENYLYLTRANSFERASE SELO, MITOCHONDRIAL"/>
    <property type="match status" value="1"/>
</dbReference>
<dbReference type="PANTHER" id="PTHR32057:SF14">
    <property type="entry name" value="PROTEIN ADENYLYLTRANSFERASE SELO, MITOCHONDRIAL"/>
    <property type="match status" value="1"/>
</dbReference>
<dbReference type="Pfam" id="PF02696">
    <property type="entry name" value="SelO"/>
    <property type="match status" value="1"/>
</dbReference>
<reference key="1">
    <citation type="submission" date="2009-05" db="EMBL/GenBank/DDBJ databases">
        <title>Complete sequence of Tolumonas auensis DSM 9187.</title>
        <authorList>
            <consortium name="US DOE Joint Genome Institute"/>
            <person name="Lucas S."/>
            <person name="Copeland A."/>
            <person name="Lapidus A."/>
            <person name="Glavina del Rio T."/>
            <person name="Tice H."/>
            <person name="Bruce D."/>
            <person name="Goodwin L."/>
            <person name="Pitluck S."/>
            <person name="Chertkov O."/>
            <person name="Brettin T."/>
            <person name="Detter J.C."/>
            <person name="Han C."/>
            <person name="Larimer F."/>
            <person name="Land M."/>
            <person name="Hauser L."/>
            <person name="Kyrpides N."/>
            <person name="Mikhailova N."/>
            <person name="Spring S."/>
            <person name="Beller H."/>
        </authorList>
    </citation>
    <scope>NUCLEOTIDE SEQUENCE [LARGE SCALE GENOMIC DNA]</scope>
    <source>
        <strain>DSM 9187 / NBRC 110442 / TA 4</strain>
    </source>
</reference>
<feature type="chain" id="PRO_1000212598" description="Protein nucleotidyltransferase YdiU">
    <location>
        <begin position="1"/>
        <end position="519"/>
    </location>
</feature>
<feature type="active site" description="Proton acceptor" evidence="1">
    <location>
        <position position="271"/>
    </location>
</feature>
<feature type="binding site" evidence="1">
    <location>
        <position position="101"/>
    </location>
    <ligand>
        <name>ATP</name>
        <dbReference type="ChEBI" id="CHEBI:30616"/>
    </ligand>
</feature>
<feature type="binding site" evidence="1">
    <location>
        <position position="103"/>
    </location>
    <ligand>
        <name>ATP</name>
        <dbReference type="ChEBI" id="CHEBI:30616"/>
    </ligand>
</feature>
<feature type="binding site" evidence="1">
    <location>
        <position position="104"/>
    </location>
    <ligand>
        <name>ATP</name>
        <dbReference type="ChEBI" id="CHEBI:30616"/>
    </ligand>
</feature>
<feature type="binding site" evidence="1">
    <location>
        <position position="123"/>
    </location>
    <ligand>
        <name>ATP</name>
        <dbReference type="ChEBI" id="CHEBI:30616"/>
    </ligand>
</feature>
<feature type="binding site" evidence="1">
    <location>
        <position position="135"/>
    </location>
    <ligand>
        <name>ATP</name>
        <dbReference type="ChEBI" id="CHEBI:30616"/>
    </ligand>
</feature>
<feature type="binding site" evidence="1">
    <location>
        <position position="136"/>
    </location>
    <ligand>
        <name>ATP</name>
        <dbReference type="ChEBI" id="CHEBI:30616"/>
    </ligand>
</feature>
<feature type="binding site" evidence="1">
    <location>
        <position position="193"/>
    </location>
    <ligand>
        <name>ATP</name>
        <dbReference type="ChEBI" id="CHEBI:30616"/>
    </ligand>
</feature>
<feature type="binding site" evidence="1">
    <location>
        <position position="200"/>
    </location>
    <ligand>
        <name>ATP</name>
        <dbReference type="ChEBI" id="CHEBI:30616"/>
    </ligand>
</feature>
<feature type="binding site" evidence="1">
    <location>
        <position position="272"/>
    </location>
    <ligand>
        <name>Mg(2+)</name>
        <dbReference type="ChEBI" id="CHEBI:18420"/>
    </ligand>
</feature>
<feature type="binding site" evidence="1">
    <location>
        <position position="281"/>
    </location>
    <ligand>
        <name>ATP</name>
        <dbReference type="ChEBI" id="CHEBI:30616"/>
    </ligand>
</feature>
<feature type="binding site" evidence="1">
    <location>
        <position position="281"/>
    </location>
    <ligand>
        <name>Mg(2+)</name>
        <dbReference type="ChEBI" id="CHEBI:18420"/>
    </ligand>
</feature>
<proteinExistence type="inferred from homology"/>
<name>SELO_TOLAT</name>
<gene>
    <name evidence="1" type="primary">ydiU</name>
    <name evidence="1" type="synonym">selO</name>
    <name type="ordered locus">Tola_0683</name>
</gene>
<protein>
    <recommendedName>
        <fullName evidence="1">Protein nucleotidyltransferase YdiU</fullName>
        <ecNumber evidence="1">2.7.7.-</ecNumber>
    </recommendedName>
    <alternativeName>
        <fullName evidence="1">Protein adenylyltransferase YdiU</fullName>
        <ecNumber evidence="1">2.7.7.108</ecNumber>
    </alternativeName>
    <alternativeName>
        <fullName evidence="1">Protein uridylyltransferase YdiU</fullName>
        <ecNumber evidence="1">2.7.7.-</ecNumber>
    </alternativeName>
</protein>
<comment type="function">
    <text evidence="1">Nucleotidyltransferase involved in the post-translational modification of proteins. It can catalyze the addition of adenosine monophosphate (AMP) or uridine monophosphate (UMP) to a protein, resulting in modifications known as AMPylation and UMPylation.</text>
</comment>
<comment type="catalytic activity">
    <reaction evidence="1">
        <text>L-seryl-[protein] + ATP = 3-O-(5'-adenylyl)-L-seryl-[protein] + diphosphate</text>
        <dbReference type="Rhea" id="RHEA:58120"/>
        <dbReference type="Rhea" id="RHEA-COMP:9863"/>
        <dbReference type="Rhea" id="RHEA-COMP:15073"/>
        <dbReference type="ChEBI" id="CHEBI:29999"/>
        <dbReference type="ChEBI" id="CHEBI:30616"/>
        <dbReference type="ChEBI" id="CHEBI:33019"/>
        <dbReference type="ChEBI" id="CHEBI:142516"/>
        <dbReference type="EC" id="2.7.7.108"/>
    </reaction>
</comment>
<comment type="catalytic activity">
    <reaction evidence="1">
        <text>L-threonyl-[protein] + ATP = 3-O-(5'-adenylyl)-L-threonyl-[protein] + diphosphate</text>
        <dbReference type="Rhea" id="RHEA:54292"/>
        <dbReference type="Rhea" id="RHEA-COMP:11060"/>
        <dbReference type="Rhea" id="RHEA-COMP:13847"/>
        <dbReference type="ChEBI" id="CHEBI:30013"/>
        <dbReference type="ChEBI" id="CHEBI:30616"/>
        <dbReference type="ChEBI" id="CHEBI:33019"/>
        <dbReference type="ChEBI" id="CHEBI:138113"/>
        <dbReference type="EC" id="2.7.7.108"/>
    </reaction>
</comment>
<comment type="catalytic activity">
    <reaction evidence="1">
        <text>L-tyrosyl-[protein] + ATP = O-(5'-adenylyl)-L-tyrosyl-[protein] + diphosphate</text>
        <dbReference type="Rhea" id="RHEA:54288"/>
        <dbReference type="Rhea" id="RHEA-COMP:10136"/>
        <dbReference type="Rhea" id="RHEA-COMP:13846"/>
        <dbReference type="ChEBI" id="CHEBI:30616"/>
        <dbReference type="ChEBI" id="CHEBI:33019"/>
        <dbReference type="ChEBI" id="CHEBI:46858"/>
        <dbReference type="ChEBI" id="CHEBI:83624"/>
        <dbReference type="EC" id="2.7.7.108"/>
    </reaction>
</comment>
<comment type="catalytic activity">
    <reaction evidence="1">
        <text>L-histidyl-[protein] + UTP = N(tele)-(5'-uridylyl)-L-histidyl-[protein] + diphosphate</text>
        <dbReference type="Rhea" id="RHEA:83891"/>
        <dbReference type="Rhea" id="RHEA-COMP:9745"/>
        <dbReference type="Rhea" id="RHEA-COMP:20239"/>
        <dbReference type="ChEBI" id="CHEBI:29979"/>
        <dbReference type="ChEBI" id="CHEBI:33019"/>
        <dbReference type="ChEBI" id="CHEBI:46398"/>
        <dbReference type="ChEBI" id="CHEBI:233474"/>
    </reaction>
</comment>
<comment type="catalytic activity">
    <reaction evidence="1">
        <text>L-seryl-[protein] + UTP = O-(5'-uridylyl)-L-seryl-[protein] + diphosphate</text>
        <dbReference type="Rhea" id="RHEA:64604"/>
        <dbReference type="Rhea" id="RHEA-COMP:9863"/>
        <dbReference type="Rhea" id="RHEA-COMP:16635"/>
        <dbReference type="ChEBI" id="CHEBI:29999"/>
        <dbReference type="ChEBI" id="CHEBI:33019"/>
        <dbReference type="ChEBI" id="CHEBI:46398"/>
        <dbReference type="ChEBI" id="CHEBI:156051"/>
    </reaction>
</comment>
<comment type="catalytic activity">
    <reaction evidence="1">
        <text>L-tyrosyl-[protein] + UTP = O-(5'-uridylyl)-L-tyrosyl-[protein] + diphosphate</text>
        <dbReference type="Rhea" id="RHEA:83887"/>
        <dbReference type="Rhea" id="RHEA-COMP:10136"/>
        <dbReference type="Rhea" id="RHEA-COMP:20238"/>
        <dbReference type="ChEBI" id="CHEBI:33019"/>
        <dbReference type="ChEBI" id="CHEBI:46398"/>
        <dbReference type="ChEBI" id="CHEBI:46858"/>
        <dbReference type="ChEBI" id="CHEBI:90602"/>
    </reaction>
</comment>
<comment type="cofactor">
    <cofactor evidence="1">
        <name>Mg(2+)</name>
        <dbReference type="ChEBI" id="CHEBI:18420"/>
    </cofactor>
    <cofactor evidence="1">
        <name>Mn(2+)</name>
        <dbReference type="ChEBI" id="CHEBI:29035"/>
    </cofactor>
</comment>
<comment type="similarity">
    <text evidence="1">Belongs to the SELO family.</text>
</comment>